<evidence type="ECO:0000255" key="1">
    <source>
        <dbReference type="HAMAP-Rule" id="MF_00693"/>
    </source>
</evidence>
<accession>A3N1F5</accession>
<protein>
    <recommendedName>
        <fullName evidence="1">Probable transcriptional regulatory protein APL_1151</fullName>
    </recommendedName>
</protein>
<keyword id="KW-0963">Cytoplasm</keyword>
<keyword id="KW-0238">DNA-binding</keyword>
<keyword id="KW-1185">Reference proteome</keyword>
<keyword id="KW-0804">Transcription</keyword>
<keyword id="KW-0805">Transcription regulation</keyword>
<name>Y1151_ACTP2</name>
<proteinExistence type="inferred from homology"/>
<organism>
    <name type="scientific">Actinobacillus pleuropneumoniae serotype 5b (strain L20)</name>
    <dbReference type="NCBI Taxonomy" id="416269"/>
    <lineage>
        <taxon>Bacteria</taxon>
        <taxon>Pseudomonadati</taxon>
        <taxon>Pseudomonadota</taxon>
        <taxon>Gammaproteobacteria</taxon>
        <taxon>Pasteurellales</taxon>
        <taxon>Pasteurellaceae</taxon>
        <taxon>Actinobacillus</taxon>
    </lineage>
</organism>
<dbReference type="EMBL" id="CP000569">
    <property type="protein sequence ID" value="ABN74241.1"/>
    <property type="molecule type" value="Genomic_DNA"/>
</dbReference>
<dbReference type="RefSeq" id="WP_005601643.1">
    <property type="nucleotide sequence ID" value="NC_009053.1"/>
</dbReference>
<dbReference type="SMR" id="A3N1F5"/>
<dbReference type="STRING" id="416269.APL_1151"/>
<dbReference type="EnsemblBacteria" id="ABN74241">
    <property type="protein sequence ID" value="ABN74241"/>
    <property type="gene ID" value="APL_1151"/>
</dbReference>
<dbReference type="KEGG" id="apl:APL_1151"/>
<dbReference type="eggNOG" id="COG0217">
    <property type="taxonomic scope" value="Bacteria"/>
</dbReference>
<dbReference type="HOGENOM" id="CLU_062974_2_2_6"/>
<dbReference type="Proteomes" id="UP000001432">
    <property type="component" value="Chromosome"/>
</dbReference>
<dbReference type="GO" id="GO:0005829">
    <property type="term" value="C:cytosol"/>
    <property type="evidence" value="ECO:0007669"/>
    <property type="project" value="TreeGrafter"/>
</dbReference>
<dbReference type="GO" id="GO:0003677">
    <property type="term" value="F:DNA binding"/>
    <property type="evidence" value="ECO:0007669"/>
    <property type="project" value="UniProtKB-UniRule"/>
</dbReference>
<dbReference type="GO" id="GO:0006355">
    <property type="term" value="P:regulation of DNA-templated transcription"/>
    <property type="evidence" value="ECO:0007669"/>
    <property type="project" value="UniProtKB-UniRule"/>
</dbReference>
<dbReference type="FunFam" id="1.10.10.200:FF:000001">
    <property type="entry name" value="Probable transcriptional regulatory protein YebC"/>
    <property type="match status" value="1"/>
</dbReference>
<dbReference type="FunFam" id="3.30.70.980:FF:000002">
    <property type="entry name" value="Probable transcriptional regulatory protein YebC"/>
    <property type="match status" value="1"/>
</dbReference>
<dbReference type="Gene3D" id="1.10.10.200">
    <property type="match status" value="1"/>
</dbReference>
<dbReference type="Gene3D" id="3.30.70.980">
    <property type="match status" value="2"/>
</dbReference>
<dbReference type="HAMAP" id="MF_00693">
    <property type="entry name" value="Transcrip_reg_TACO1"/>
    <property type="match status" value="1"/>
</dbReference>
<dbReference type="InterPro" id="IPR017856">
    <property type="entry name" value="Integrase-like_N"/>
</dbReference>
<dbReference type="InterPro" id="IPR048300">
    <property type="entry name" value="TACO1_YebC-like_2nd/3rd_dom"/>
</dbReference>
<dbReference type="InterPro" id="IPR049083">
    <property type="entry name" value="TACO1_YebC_N"/>
</dbReference>
<dbReference type="InterPro" id="IPR002876">
    <property type="entry name" value="Transcrip_reg_TACO1-like"/>
</dbReference>
<dbReference type="InterPro" id="IPR026564">
    <property type="entry name" value="Transcrip_reg_TACO1-like_dom3"/>
</dbReference>
<dbReference type="InterPro" id="IPR029072">
    <property type="entry name" value="YebC-like"/>
</dbReference>
<dbReference type="NCBIfam" id="NF001030">
    <property type="entry name" value="PRK00110.1"/>
    <property type="match status" value="1"/>
</dbReference>
<dbReference type="NCBIfam" id="NF009044">
    <property type="entry name" value="PRK12378.1"/>
    <property type="match status" value="1"/>
</dbReference>
<dbReference type="NCBIfam" id="TIGR01033">
    <property type="entry name" value="YebC/PmpR family DNA-binding transcriptional regulator"/>
    <property type="match status" value="1"/>
</dbReference>
<dbReference type="PANTHER" id="PTHR12532:SF6">
    <property type="entry name" value="TRANSCRIPTIONAL REGULATORY PROTEIN YEBC-RELATED"/>
    <property type="match status" value="1"/>
</dbReference>
<dbReference type="PANTHER" id="PTHR12532">
    <property type="entry name" value="TRANSLATIONAL ACTIVATOR OF CYTOCHROME C OXIDASE 1"/>
    <property type="match status" value="1"/>
</dbReference>
<dbReference type="Pfam" id="PF20772">
    <property type="entry name" value="TACO1_YebC_N"/>
    <property type="match status" value="1"/>
</dbReference>
<dbReference type="Pfam" id="PF01709">
    <property type="entry name" value="Transcrip_reg"/>
    <property type="match status" value="1"/>
</dbReference>
<dbReference type="SUPFAM" id="SSF75625">
    <property type="entry name" value="YebC-like"/>
    <property type="match status" value="1"/>
</dbReference>
<reference key="1">
    <citation type="journal article" date="2008" name="J. Bacteriol.">
        <title>The complete genome sequence of Actinobacillus pleuropneumoniae L20 (serotype 5b).</title>
        <authorList>
            <person name="Foote S.J."/>
            <person name="Bosse J.T."/>
            <person name="Bouevitch A.B."/>
            <person name="Langford P.R."/>
            <person name="Young N.M."/>
            <person name="Nash J.H.E."/>
        </authorList>
    </citation>
    <scope>NUCLEOTIDE SEQUENCE [LARGE SCALE GENOMIC DNA]</scope>
    <source>
        <strain>L20</strain>
    </source>
</reference>
<feature type="chain" id="PRO_1000045267" description="Probable transcriptional regulatory protein APL_1151">
    <location>
        <begin position="1"/>
        <end position="246"/>
    </location>
</feature>
<gene>
    <name type="ordered locus">APL_1151</name>
</gene>
<comment type="subcellular location">
    <subcellularLocation>
        <location evidence="1">Cytoplasm</location>
    </subcellularLocation>
</comment>
<comment type="similarity">
    <text evidence="1">Belongs to the TACO1 family.</text>
</comment>
<sequence>MAGHSKWANIKHRKAAQDAQRGKIFTKLIRELVTAAKIGGGDVSANPRLRSAVDKALSNNMTRDTINRAIERGVGGGDDTNMETKIYEGYGPGGTAVMVECLSDNANRTISQVRPSFTKCGGNLGTEGSVGYLFSKKGLILIASGDEDALTEAAIEAGADDIQPQEDGSFEIYTAWEDLGSVRDGIEAAGFKIQEAEVTMIPSTTVELDAETAPKLLDLINRLEDCDDVQNVYHNGEISDEVAALL</sequence>